<organism>
    <name type="scientific">Xenopus laevis</name>
    <name type="common">African clawed frog</name>
    <dbReference type="NCBI Taxonomy" id="8355"/>
    <lineage>
        <taxon>Eukaryota</taxon>
        <taxon>Metazoa</taxon>
        <taxon>Chordata</taxon>
        <taxon>Craniata</taxon>
        <taxon>Vertebrata</taxon>
        <taxon>Euteleostomi</taxon>
        <taxon>Amphibia</taxon>
        <taxon>Batrachia</taxon>
        <taxon>Anura</taxon>
        <taxon>Pipoidea</taxon>
        <taxon>Pipidae</taxon>
        <taxon>Xenopodinae</taxon>
        <taxon>Xenopus</taxon>
        <taxon>Xenopus</taxon>
    </lineage>
</organism>
<name>MPIP3_XENLA</name>
<keyword id="KW-0002">3D-structure</keyword>
<keyword id="KW-0131">Cell cycle</keyword>
<keyword id="KW-0132">Cell division</keyword>
<keyword id="KW-0378">Hydrolase</keyword>
<keyword id="KW-0498">Mitosis</keyword>
<keyword id="KW-0904">Protein phosphatase</keyword>
<keyword id="KW-1185">Reference proteome</keyword>
<accession>P30311</accession>
<protein>
    <recommendedName>
        <fullName>M-phase inducer phosphatase 3</fullName>
        <ecNumber>3.1.3.48</ecNumber>
    </recommendedName>
</protein>
<reference key="1">
    <citation type="journal article" date="1992" name="Cell">
        <title>Regulation of the cdc25 protein during the cell cycle in Xenopus extracts.</title>
        <authorList>
            <person name="Kumagai A."/>
            <person name="Dunphy W.G."/>
        </authorList>
    </citation>
    <scope>NUCLEOTIDE SEQUENCE [MRNA]</scope>
</reference>
<proteinExistence type="evidence at protein level"/>
<comment type="function">
    <text>This protein functions as a dosage-dependent inducer in mitotic control. It is a tyrosine protein phosphatase required for progression of the cell cycle. It may directly dephosphorylate p34(cdc2) and activate the p34(cdc2) kinase activity.</text>
</comment>
<comment type="catalytic activity">
    <reaction>
        <text>O-phospho-L-tyrosyl-[protein] + H2O = L-tyrosyl-[protein] + phosphate</text>
        <dbReference type="Rhea" id="RHEA:10684"/>
        <dbReference type="Rhea" id="RHEA-COMP:10136"/>
        <dbReference type="Rhea" id="RHEA-COMP:20101"/>
        <dbReference type="ChEBI" id="CHEBI:15377"/>
        <dbReference type="ChEBI" id="CHEBI:43474"/>
        <dbReference type="ChEBI" id="CHEBI:46858"/>
        <dbReference type="ChEBI" id="CHEBI:61978"/>
        <dbReference type="EC" id="3.1.3.48"/>
    </reaction>
</comment>
<comment type="similarity">
    <text evidence="4">Belongs to the MPI phosphatase family.</text>
</comment>
<evidence type="ECO:0000250" key="1"/>
<evidence type="ECO:0000255" key="2">
    <source>
        <dbReference type="PROSITE-ProRule" id="PRU00173"/>
    </source>
</evidence>
<evidence type="ECO:0000256" key="3">
    <source>
        <dbReference type="SAM" id="MobiDB-lite"/>
    </source>
</evidence>
<evidence type="ECO:0000305" key="4"/>
<evidence type="ECO:0007829" key="5">
    <source>
        <dbReference type="PDB" id="1I8G"/>
    </source>
</evidence>
<gene>
    <name type="primary">cdc25-3</name>
</gene>
<dbReference type="EC" id="3.1.3.48"/>
<dbReference type="EMBL" id="M94264">
    <property type="protein sequence ID" value="AAA49675.1"/>
    <property type="molecule type" value="mRNA"/>
</dbReference>
<dbReference type="PIR" id="C42679">
    <property type="entry name" value="C42679"/>
</dbReference>
<dbReference type="RefSeq" id="NP_001081256.1">
    <property type="nucleotide sequence ID" value="NM_001087787.1"/>
</dbReference>
<dbReference type="PDB" id="1I8G">
    <property type="method" value="NMR"/>
    <property type="chains" value="A=63-72"/>
</dbReference>
<dbReference type="PDBsum" id="1I8G"/>
<dbReference type="SMR" id="P30311"/>
<dbReference type="BioGRID" id="99076">
    <property type="interactions" value="2"/>
</dbReference>
<dbReference type="EvolutionaryTrace" id="P30311"/>
<dbReference type="Proteomes" id="UP000186698">
    <property type="component" value="Unplaced"/>
</dbReference>
<dbReference type="Bgee" id="397737">
    <property type="expression patterns" value="Expressed in muscle tissue and 19 other cell types or tissues"/>
</dbReference>
<dbReference type="GO" id="GO:0005737">
    <property type="term" value="C:cytoplasm"/>
    <property type="evidence" value="ECO:0000318"/>
    <property type="project" value="GO_Central"/>
</dbReference>
<dbReference type="GO" id="GO:0005634">
    <property type="term" value="C:nucleus"/>
    <property type="evidence" value="ECO:0000318"/>
    <property type="project" value="GO_Central"/>
</dbReference>
<dbReference type="GO" id="GO:0004725">
    <property type="term" value="F:protein tyrosine phosphatase activity"/>
    <property type="evidence" value="ECO:0000318"/>
    <property type="project" value="GO_Central"/>
</dbReference>
<dbReference type="GO" id="GO:0051301">
    <property type="term" value="P:cell division"/>
    <property type="evidence" value="ECO:0007669"/>
    <property type="project" value="UniProtKB-KW"/>
</dbReference>
<dbReference type="GO" id="GO:0000086">
    <property type="term" value="P:G2/M transition of mitotic cell cycle"/>
    <property type="evidence" value="ECO:0000318"/>
    <property type="project" value="GO_Central"/>
</dbReference>
<dbReference type="GO" id="GO:0010971">
    <property type="term" value="P:positive regulation of G2/M transition of mitotic cell cycle"/>
    <property type="evidence" value="ECO:0000318"/>
    <property type="project" value="GO_Central"/>
</dbReference>
<dbReference type="GO" id="GO:0110032">
    <property type="term" value="P:positive regulation of G2/MI transition of meiotic cell cycle"/>
    <property type="evidence" value="ECO:0000318"/>
    <property type="project" value="GO_Central"/>
</dbReference>
<dbReference type="CDD" id="cd01530">
    <property type="entry name" value="Cdc25"/>
    <property type="match status" value="1"/>
</dbReference>
<dbReference type="FunFam" id="3.40.250.10:FF:000004">
    <property type="entry name" value="M-phase inducer phosphatase 1 isoform X1"/>
    <property type="match status" value="1"/>
</dbReference>
<dbReference type="Gene3D" id="3.40.250.10">
    <property type="entry name" value="Rhodanese-like domain"/>
    <property type="match status" value="1"/>
</dbReference>
<dbReference type="InterPro" id="IPR000751">
    <property type="entry name" value="MPI_Phosphatase"/>
</dbReference>
<dbReference type="InterPro" id="IPR001763">
    <property type="entry name" value="Rhodanese-like_dom"/>
</dbReference>
<dbReference type="InterPro" id="IPR036873">
    <property type="entry name" value="Rhodanese-like_dom_sf"/>
</dbReference>
<dbReference type="PANTHER" id="PTHR10828:SF64">
    <property type="entry name" value="M-PHASE INDUCER PHOSPHATASE 3"/>
    <property type="match status" value="1"/>
</dbReference>
<dbReference type="PANTHER" id="PTHR10828">
    <property type="entry name" value="M-PHASE INDUCER PHOSPHATASE DUAL SPECIFICITY PHOSPHATASE CDC25"/>
    <property type="match status" value="1"/>
</dbReference>
<dbReference type="Pfam" id="PF06617">
    <property type="entry name" value="M-inducer_phosp"/>
    <property type="match status" value="1"/>
</dbReference>
<dbReference type="Pfam" id="PF00581">
    <property type="entry name" value="Rhodanese"/>
    <property type="match status" value="1"/>
</dbReference>
<dbReference type="PRINTS" id="PR00716">
    <property type="entry name" value="MPIPHPHTASE"/>
</dbReference>
<dbReference type="SMART" id="SM00450">
    <property type="entry name" value="RHOD"/>
    <property type="match status" value="1"/>
</dbReference>
<dbReference type="SUPFAM" id="SSF52821">
    <property type="entry name" value="Rhodanese/Cell cycle control phosphatase"/>
    <property type="match status" value="1"/>
</dbReference>
<dbReference type="PROSITE" id="PS50206">
    <property type="entry name" value="RHODANESE_3"/>
    <property type="match status" value="1"/>
</dbReference>
<sequence>MIKERVTPPFQASGGSGVVMAESHIISSEAPPKSNPGLNIRTNCRMILNLLREKDCSVTFSPEQPLTPVTDLAVGFSNLSTFSGETPKRCLDLSNLGDETAPLPTESPDRMSSGKLESPKTQFVQFDGLFTPDLAWKAKKCPKRNMNSVLPHLLCSTPSFKKASGGQRSLSNKENEGELFKNPNCKPVALLLPQEVVDSQLSPTPENKVDISLDEDCEMNILGSPISADPPCLDGAHDDIKMQNLDGFADFFSVDEEEMENPPGAVGNLSCSMAILLSGPLLNQDVEISNVNNISLNRSRLYRSPSMPEKLDRPMLKRPVRPLNSETPVRVKRRRSTSSPLQPEEENCQPQRRGTSLKKTLSLCDVDISSVLDEDCGHRQLIGDFSKVYALPTVTGRHQDLRYITGETLAALMHGDFNSLVEKFFIIDCRYPYEYDGGHIKSAFNLHRQDEVTDYFLQQPLTPLMAQKRLIIIFHCEFSSERGPKMCRSLREEDRASNDYPSLYYPELYLLKGGYKDFFPEYKELCEPQSYCPMHHQDFREDLLKFRTKCKTSVGDRKRREPEFRLTGQRLG</sequence>
<feature type="chain" id="PRO_0000198654" description="M-phase inducer phosphatase 3">
    <location>
        <begin position="1"/>
        <end position="572"/>
    </location>
</feature>
<feature type="domain" description="Rhodanese" evidence="2">
    <location>
        <begin position="420"/>
        <end position="527"/>
    </location>
</feature>
<feature type="region of interest" description="Disordered" evidence="3">
    <location>
        <begin position="95"/>
        <end position="117"/>
    </location>
</feature>
<feature type="region of interest" description="Disordered" evidence="3">
    <location>
        <begin position="304"/>
        <end position="354"/>
    </location>
</feature>
<feature type="active site" evidence="1">
    <location>
        <position position="476"/>
    </location>
</feature>
<feature type="strand" evidence="5">
    <location>
        <begin position="68"/>
        <end position="70"/>
    </location>
</feature>